<keyword id="KW-0004">4Fe-4S</keyword>
<keyword id="KW-0963">Cytoplasm</keyword>
<keyword id="KW-1015">Disulfide bond</keyword>
<keyword id="KW-0408">Iron</keyword>
<keyword id="KW-0411">Iron-sulfur</keyword>
<keyword id="KW-0479">Metal-binding</keyword>
<keyword id="KW-0489">Methyltransferase</keyword>
<keyword id="KW-0698">rRNA processing</keyword>
<keyword id="KW-0949">S-adenosyl-L-methionine</keyword>
<keyword id="KW-0808">Transferase</keyword>
<keyword id="KW-0819">tRNA processing</keyword>
<reference key="1">
    <citation type="journal article" date="2007" name="Nat. Genet.">
        <title>Genomic analysis of Bartonella identifies type IV secretion systems as host adaptability factors.</title>
        <authorList>
            <person name="Saenz H.L."/>
            <person name="Engel P."/>
            <person name="Stoeckli M.C."/>
            <person name="Lanz C."/>
            <person name="Raddatz G."/>
            <person name="Vayssier-Taussat M."/>
            <person name="Birtles R."/>
            <person name="Schuster S.C."/>
            <person name="Dehio C."/>
        </authorList>
    </citation>
    <scope>NUCLEOTIDE SEQUENCE [LARGE SCALE GENOMIC DNA]</scope>
    <source>
        <strain>CIP 105476 / IBS 506</strain>
    </source>
</reference>
<proteinExistence type="inferred from homology"/>
<feature type="chain" id="PRO_0000350047" description="Dual-specificity RNA methyltransferase RlmN">
    <location>
        <begin position="1"/>
        <end position="408"/>
    </location>
</feature>
<feature type="domain" description="Radical SAM core" evidence="2">
    <location>
        <begin position="132"/>
        <end position="373"/>
    </location>
</feature>
<feature type="active site" description="Proton acceptor" evidence="1">
    <location>
        <position position="126"/>
    </location>
</feature>
<feature type="active site" description="S-methylcysteine intermediate" evidence="1">
    <location>
        <position position="384"/>
    </location>
</feature>
<feature type="binding site" evidence="1">
    <location>
        <position position="146"/>
    </location>
    <ligand>
        <name>[4Fe-4S] cluster</name>
        <dbReference type="ChEBI" id="CHEBI:49883"/>
        <note>4Fe-4S-S-AdoMet</note>
    </ligand>
</feature>
<feature type="binding site" evidence="1">
    <location>
        <position position="150"/>
    </location>
    <ligand>
        <name>[4Fe-4S] cluster</name>
        <dbReference type="ChEBI" id="CHEBI:49883"/>
        <note>4Fe-4S-S-AdoMet</note>
    </ligand>
</feature>
<feature type="binding site" evidence="1">
    <location>
        <position position="153"/>
    </location>
    <ligand>
        <name>[4Fe-4S] cluster</name>
        <dbReference type="ChEBI" id="CHEBI:49883"/>
        <note>4Fe-4S-S-AdoMet</note>
    </ligand>
</feature>
<feature type="binding site" evidence="1">
    <location>
        <begin position="210"/>
        <end position="211"/>
    </location>
    <ligand>
        <name>S-adenosyl-L-methionine</name>
        <dbReference type="ChEBI" id="CHEBI:59789"/>
    </ligand>
</feature>
<feature type="binding site" evidence="1">
    <location>
        <position position="242"/>
    </location>
    <ligand>
        <name>S-adenosyl-L-methionine</name>
        <dbReference type="ChEBI" id="CHEBI:59789"/>
    </ligand>
</feature>
<feature type="binding site" evidence="1">
    <location>
        <begin position="264"/>
        <end position="266"/>
    </location>
    <ligand>
        <name>S-adenosyl-L-methionine</name>
        <dbReference type="ChEBI" id="CHEBI:59789"/>
    </ligand>
</feature>
<feature type="binding site" evidence="1">
    <location>
        <position position="341"/>
    </location>
    <ligand>
        <name>S-adenosyl-L-methionine</name>
        <dbReference type="ChEBI" id="CHEBI:59789"/>
    </ligand>
</feature>
<feature type="disulfide bond" description="(transient)" evidence="1">
    <location>
        <begin position="139"/>
        <end position="384"/>
    </location>
</feature>
<sequence length="408" mass="45457">MAISYDLRPVGSCLERKTDNIVVKESSKLSLIGLSQDEIVQALKTVGVPERQTRMRARQLWHWLYVRGVSNFDEMLNISKVMQETLKHHFSIARPEIVGEQISKDGTRKWLLRFPARGAGRPVEIETVYIPEEGRGTLCLSSQVGCTLTCSFCHTGTQMLVRNLTAEEILAQLLVARDCLGDFPDKNTPDGAIVPVEGRKVTNIVMMGMGEPLYNYEAVKKALLIASDGDGLSLSKRRITLSTSGVVPGIIRTGEEIGVMLAISLHAVHDTVRDMLVPINKKYPLTLLMDACRNYPGLSNAKRITFEYVMLKDINDSLDDAKRLIQLLKGIPAKINLIPFNPWPGSNYQCSDWEQIERFADVVNQAGYASPIRTPRGRDILAACGQLKSASERLRKSERLKLENAIGH</sequence>
<accession>A9IL44</accession>
<evidence type="ECO:0000255" key="1">
    <source>
        <dbReference type="HAMAP-Rule" id="MF_01849"/>
    </source>
</evidence>
<evidence type="ECO:0000255" key="2">
    <source>
        <dbReference type="PROSITE-ProRule" id="PRU01266"/>
    </source>
</evidence>
<dbReference type="EC" id="2.1.1.192" evidence="1"/>
<dbReference type="EMBL" id="AM260525">
    <property type="protein sequence ID" value="CAK00524.1"/>
    <property type="molecule type" value="Genomic_DNA"/>
</dbReference>
<dbReference type="RefSeq" id="WP_012230287.1">
    <property type="nucleotide sequence ID" value="NC_010161.1"/>
</dbReference>
<dbReference type="SMR" id="A9IL44"/>
<dbReference type="KEGG" id="btr:BT_0020"/>
<dbReference type="eggNOG" id="COG0820">
    <property type="taxonomic scope" value="Bacteria"/>
</dbReference>
<dbReference type="HOGENOM" id="CLU_029101_2_0_5"/>
<dbReference type="Proteomes" id="UP000001592">
    <property type="component" value="Chromosome"/>
</dbReference>
<dbReference type="GO" id="GO:0005737">
    <property type="term" value="C:cytoplasm"/>
    <property type="evidence" value="ECO:0007669"/>
    <property type="project" value="UniProtKB-SubCell"/>
</dbReference>
<dbReference type="GO" id="GO:0051539">
    <property type="term" value="F:4 iron, 4 sulfur cluster binding"/>
    <property type="evidence" value="ECO:0007669"/>
    <property type="project" value="UniProtKB-UniRule"/>
</dbReference>
<dbReference type="GO" id="GO:0046872">
    <property type="term" value="F:metal ion binding"/>
    <property type="evidence" value="ECO:0007669"/>
    <property type="project" value="UniProtKB-KW"/>
</dbReference>
<dbReference type="GO" id="GO:0070040">
    <property type="term" value="F:rRNA (adenine(2503)-C2-)-methyltransferase activity"/>
    <property type="evidence" value="ECO:0007669"/>
    <property type="project" value="UniProtKB-UniRule"/>
</dbReference>
<dbReference type="GO" id="GO:0019843">
    <property type="term" value="F:rRNA binding"/>
    <property type="evidence" value="ECO:0007669"/>
    <property type="project" value="UniProtKB-UniRule"/>
</dbReference>
<dbReference type="GO" id="GO:0002935">
    <property type="term" value="F:tRNA (adenine(37)-C2)-methyltransferase activity"/>
    <property type="evidence" value="ECO:0007669"/>
    <property type="project" value="UniProtKB-UniRule"/>
</dbReference>
<dbReference type="GO" id="GO:0000049">
    <property type="term" value="F:tRNA binding"/>
    <property type="evidence" value="ECO:0007669"/>
    <property type="project" value="UniProtKB-UniRule"/>
</dbReference>
<dbReference type="GO" id="GO:0070475">
    <property type="term" value="P:rRNA base methylation"/>
    <property type="evidence" value="ECO:0007669"/>
    <property type="project" value="UniProtKB-UniRule"/>
</dbReference>
<dbReference type="GO" id="GO:0030488">
    <property type="term" value="P:tRNA methylation"/>
    <property type="evidence" value="ECO:0007669"/>
    <property type="project" value="UniProtKB-UniRule"/>
</dbReference>
<dbReference type="CDD" id="cd01335">
    <property type="entry name" value="Radical_SAM"/>
    <property type="match status" value="1"/>
</dbReference>
<dbReference type="FunFam" id="3.20.20.70:FF:000008">
    <property type="entry name" value="Dual-specificity RNA methyltransferase RlmN"/>
    <property type="match status" value="1"/>
</dbReference>
<dbReference type="Gene3D" id="1.10.150.530">
    <property type="match status" value="1"/>
</dbReference>
<dbReference type="Gene3D" id="3.20.20.70">
    <property type="entry name" value="Aldolase class I"/>
    <property type="match status" value="1"/>
</dbReference>
<dbReference type="HAMAP" id="MF_01849">
    <property type="entry name" value="RNA_methyltr_RlmN"/>
    <property type="match status" value="1"/>
</dbReference>
<dbReference type="InterPro" id="IPR013785">
    <property type="entry name" value="Aldolase_TIM"/>
</dbReference>
<dbReference type="InterPro" id="IPR040072">
    <property type="entry name" value="Methyltransferase_A"/>
</dbReference>
<dbReference type="InterPro" id="IPR048641">
    <property type="entry name" value="RlmN_N"/>
</dbReference>
<dbReference type="InterPro" id="IPR027492">
    <property type="entry name" value="RNA_MTrfase_RlmN"/>
</dbReference>
<dbReference type="InterPro" id="IPR004383">
    <property type="entry name" value="rRNA_lsu_MTrfase_RlmN/Cfr"/>
</dbReference>
<dbReference type="InterPro" id="IPR007197">
    <property type="entry name" value="rSAM"/>
</dbReference>
<dbReference type="NCBIfam" id="TIGR00048">
    <property type="entry name" value="rRNA_mod_RlmN"/>
    <property type="match status" value="1"/>
</dbReference>
<dbReference type="PANTHER" id="PTHR30544">
    <property type="entry name" value="23S RRNA METHYLTRANSFERASE"/>
    <property type="match status" value="1"/>
</dbReference>
<dbReference type="PANTHER" id="PTHR30544:SF5">
    <property type="entry name" value="RADICAL SAM CORE DOMAIN-CONTAINING PROTEIN"/>
    <property type="match status" value="1"/>
</dbReference>
<dbReference type="Pfam" id="PF04055">
    <property type="entry name" value="Radical_SAM"/>
    <property type="match status" value="1"/>
</dbReference>
<dbReference type="Pfam" id="PF21016">
    <property type="entry name" value="RlmN_N"/>
    <property type="match status" value="1"/>
</dbReference>
<dbReference type="PIRSF" id="PIRSF006004">
    <property type="entry name" value="CHP00048"/>
    <property type="match status" value="1"/>
</dbReference>
<dbReference type="SFLD" id="SFLDF00275">
    <property type="entry name" value="adenosine_C2_methyltransferase"/>
    <property type="match status" value="1"/>
</dbReference>
<dbReference type="SFLD" id="SFLDG01062">
    <property type="entry name" value="methyltransferase_(Class_A)"/>
    <property type="match status" value="1"/>
</dbReference>
<dbReference type="SUPFAM" id="SSF102114">
    <property type="entry name" value="Radical SAM enzymes"/>
    <property type="match status" value="1"/>
</dbReference>
<dbReference type="PROSITE" id="PS51918">
    <property type="entry name" value="RADICAL_SAM"/>
    <property type="match status" value="1"/>
</dbReference>
<organism>
    <name type="scientific">Bartonella tribocorum (strain CIP 105476 / IBS 506)</name>
    <dbReference type="NCBI Taxonomy" id="382640"/>
    <lineage>
        <taxon>Bacteria</taxon>
        <taxon>Pseudomonadati</taxon>
        <taxon>Pseudomonadota</taxon>
        <taxon>Alphaproteobacteria</taxon>
        <taxon>Hyphomicrobiales</taxon>
        <taxon>Bartonellaceae</taxon>
        <taxon>Bartonella</taxon>
    </lineage>
</organism>
<protein>
    <recommendedName>
        <fullName evidence="1">Dual-specificity RNA methyltransferase RlmN</fullName>
        <ecNumber evidence="1">2.1.1.192</ecNumber>
    </recommendedName>
    <alternativeName>
        <fullName evidence="1">23S rRNA (adenine(2503)-C(2))-methyltransferase</fullName>
    </alternativeName>
    <alternativeName>
        <fullName evidence="1">23S rRNA m2A2503 methyltransferase</fullName>
    </alternativeName>
    <alternativeName>
        <fullName evidence="1">Ribosomal RNA large subunit methyltransferase N</fullName>
    </alternativeName>
    <alternativeName>
        <fullName evidence="1">tRNA (adenine(37)-C(2))-methyltransferase</fullName>
    </alternativeName>
    <alternativeName>
        <fullName evidence="1">tRNA m2A37 methyltransferase</fullName>
    </alternativeName>
</protein>
<gene>
    <name evidence="1" type="primary">rlmN</name>
    <name type="ordered locus">BT_0020</name>
</gene>
<name>RLMN_BART1</name>
<comment type="function">
    <text evidence="1">Specifically methylates position 2 of adenine 2503 in 23S rRNA and position 2 of adenine 37 in tRNAs. m2A2503 modification seems to play a crucial role in the proofreading step occurring at the peptidyl transferase center and thus would serve to optimize ribosomal fidelity.</text>
</comment>
<comment type="catalytic activity">
    <reaction evidence="1">
        <text>adenosine(2503) in 23S rRNA + 2 reduced [2Fe-2S]-[ferredoxin] + 2 S-adenosyl-L-methionine = 2-methyladenosine(2503) in 23S rRNA + 5'-deoxyadenosine + L-methionine + 2 oxidized [2Fe-2S]-[ferredoxin] + S-adenosyl-L-homocysteine</text>
        <dbReference type="Rhea" id="RHEA:42916"/>
        <dbReference type="Rhea" id="RHEA-COMP:10000"/>
        <dbReference type="Rhea" id="RHEA-COMP:10001"/>
        <dbReference type="Rhea" id="RHEA-COMP:10152"/>
        <dbReference type="Rhea" id="RHEA-COMP:10282"/>
        <dbReference type="ChEBI" id="CHEBI:17319"/>
        <dbReference type="ChEBI" id="CHEBI:33737"/>
        <dbReference type="ChEBI" id="CHEBI:33738"/>
        <dbReference type="ChEBI" id="CHEBI:57844"/>
        <dbReference type="ChEBI" id="CHEBI:57856"/>
        <dbReference type="ChEBI" id="CHEBI:59789"/>
        <dbReference type="ChEBI" id="CHEBI:74411"/>
        <dbReference type="ChEBI" id="CHEBI:74497"/>
        <dbReference type="EC" id="2.1.1.192"/>
    </reaction>
</comment>
<comment type="catalytic activity">
    <reaction evidence="1">
        <text>adenosine(37) in tRNA + 2 reduced [2Fe-2S]-[ferredoxin] + 2 S-adenosyl-L-methionine = 2-methyladenosine(37) in tRNA + 5'-deoxyadenosine + L-methionine + 2 oxidized [2Fe-2S]-[ferredoxin] + S-adenosyl-L-homocysteine</text>
        <dbReference type="Rhea" id="RHEA:43332"/>
        <dbReference type="Rhea" id="RHEA-COMP:10000"/>
        <dbReference type="Rhea" id="RHEA-COMP:10001"/>
        <dbReference type="Rhea" id="RHEA-COMP:10162"/>
        <dbReference type="Rhea" id="RHEA-COMP:10485"/>
        <dbReference type="ChEBI" id="CHEBI:17319"/>
        <dbReference type="ChEBI" id="CHEBI:33737"/>
        <dbReference type="ChEBI" id="CHEBI:33738"/>
        <dbReference type="ChEBI" id="CHEBI:57844"/>
        <dbReference type="ChEBI" id="CHEBI:57856"/>
        <dbReference type="ChEBI" id="CHEBI:59789"/>
        <dbReference type="ChEBI" id="CHEBI:74411"/>
        <dbReference type="ChEBI" id="CHEBI:74497"/>
        <dbReference type="EC" id="2.1.1.192"/>
    </reaction>
</comment>
<comment type="cofactor">
    <cofactor evidence="1">
        <name>[4Fe-4S] cluster</name>
        <dbReference type="ChEBI" id="CHEBI:49883"/>
    </cofactor>
    <text evidence="1">Binds 1 [4Fe-4S] cluster. The cluster is coordinated with 3 cysteines and an exchangeable S-adenosyl-L-methionine.</text>
</comment>
<comment type="subcellular location">
    <subcellularLocation>
        <location evidence="1">Cytoplasm</location>
    </subcellularLocation>
</comment>
<comment type="miscellaneous">
    <text evidence="1">Reaction proceeds by a ping-pong mechanism involving intermediate methylation of a conserved cysteine residue.</text>
</comment>
<comment type="similarity">
    <text evidence="1">Belongs to the radical SAM superfamily. RlmN family.</text>
</comment>